<reference key="1">
    <citation type="journal article" date="2009" name="Genome Res.">
        <title>Whole genome sequence of Desulfovibrio magneticus strain RS-1 revealed common gene clusters in magnetotactic bacteria.</title>
        <authorList>
            <person name="Nakazawa H."/>
            <person name="Arakaki A."/>
            <person name="Narita-Yamada S."/>
            <person name="Yashiro I."/>
            <person name="Jinno K."/>
            <person name="Aoki N."/>
            <person name="Tsuruyama A."/>
            <person name="Okamura Y."/>
            <person name="Tanikawa S."/>
            <person name="Fujita N."/>
            <person name="Takeyama H."/>
            <person name="Matsunaga T."/>
        </authorList>
    </citation>
    <scope>NUCLEOTIDE SEQUENCE [LARGE SCALE GENOMIC DNA]</scope>
    <source>
        <strain>ATCC 700980 / DSM 13731 / RS-1</strain>
    </source>
</reference>
<evidence type="ECO:0000255" key="1">
    <source>
        <dbReference type="HAMAP-Rule" id="MF_01043"/>
    </source>
</evidence>
<name>PLSY_SOLM1</name>
<comment type="function">
    <text evidence="1">Catalyzes the transfer of an acyl group from acyl-phosphate (acyl-PO(4)) to glycerol-3-phosphate (G3P) to form lysophosphatidic acid (LPA). This enzyme utilizes acyl-phosphate as fatty acyl donor, but not acyl-CoA or acyl-ACP.</text>
</comment>
<comment type="catalytic activity">
    <reaction evidence="1">
        <text>an acyl phosphate + sn-glycerol 3-phosphate = a 1-acyl-sn-glycero-3-phosphate + phosphate</text>
        <dbReference type="Rhea" id="RHEA:34075"/>
        <dbReference type="ChEBI" id="CHEBI:43474"/>
        <dbReference type="ChEBI" id="CHEBI:57597"/>
        <dbReference type="ChEBI" id="CHEBI:57970"/>
        <dbReference type="ChEBI" id="CHEBI:59918"/>
        <dbReference type="EC" id="2.3.1.275"/>
    </reaction>
</comment>
<comment type="pathway">
    <text evidence="1">Lipid metabolism; phospholipid metabolism.</text>
</comment>
<comment type="subunit">
    <text evidence="1">Probably interacts with PlsX.</text>
</comment>
<comment type="subcellular location">
    <subcellularLocation>
        <location evidence="1">Cell inner membrane</location>
        <topology evidence="1">Multi-pass membrane protein</topology>
    </subcellularLocation>
</comment>
<comment type="similarity">
    <text evidence="1">Belongs to the PlsY family.</text>
</comment>
<protein>
    <recommendedName>
        <fullName evidence="1">Glycerol-3-phosphate acyltransferase</fullName>
    </recommendedName>
    <alternativeName>
        <fullName evidence="1">Acyl-PO4 G3P acyltransferase</fullName>
    </alternativeName>
    <alternativeName>
        <fullName evidence="1">Acyl-phosphate--glycerol-3-phosphate acyltransferase</fullName>
    </alternativeName>
    <alternativeName>
        <fullName evidence="1">G3P acyltransferase</fullName>
        <shortName evidence="1">GPAT</shortName>
        <ecNumber evidence="1">2.3.1.275</ecNumber>
    </alternativeName>
    <alternativeName>
        <fullName evidence="1">Lysophosphatidic acid synthase</fullName>
        <shortName evidence="1">LPA synthase</shortName>
    </alternativeName>
</protein>
<proteinExistence type="inferred from homology"/>
<keyword id="KW-0997">Cell inner membrane</keyword>
<keyword id="KW-1003">Cell membrane</keyword>
<keyword id="KW-0444">Lipid biosynthesis</keyword>
<keyword id="KW-0443">Lipid metabolism</keyword>
<keyword id="KW-0472">Membrane</keyword>
<keyword id="KW-0594">Phospholipid biosynthesis</keyword>
<keyword id="KW-1208">Phospholipid metabolism</keyword>
<keyword id="KW-0808">Transferase</keyword>
<keyword id="KW-0812">Transmembrane</keyword>
<keyword id="KW-1133">Transmembrane helix</keyword>
<sequence length="199" mass="20421">MAATAFLVLTYLLGAFPFGLVVALVGRGIDPRLAGSRNTGATNVSRLCGTKLGVLTLVLDLAKGLVPVLCARAMTDSPVFLSMVAVAAVVGHMYSVFLYGKGGKGVATTIGVFLGGAPIPALLSVAVCVAVIRVSGYVSAGSLTLAVALPILCAWLGPVFLVPAAAIIGGLVIHKHRDNIARLRSGQEKSWRKDRAKAA</sequence>
<dbReference type="EC" id="2.3.1.275" evidence="1"/>
<dbReference type="EMBL" id="AP010904">
    <property type="protein sequence ID" value="BAH73820.1"/>
    <property type="molecule type" value="Genomic_DNA"/>
</dbReference>
<dbReference type="RefSeq" id="WP_012749905.1">
    <property type="nucleotide sequence ID" value="NC_012796.1"/>
</dbReference>
<dbReference type="SMR" id="C4XH52"/>
<dbReference type="STRING" id="573370.DMR_03290"/>
<dbReference type="KEGG" id="dma:DMR_03290"/>
<dbReference type="eggNOG" id="COG0344">
    <property type="taxonomic scope" value="Bacteria"/>
</dbReference>
<dbReference type="HOGENOM" id="CLU_081254_0_2_7"/>
<dbReference type="OrthoDB" id="9777124at2"/>
<dbReference type="UniPathway" id="UPA00085"/>
<dbReference type="Proteomes" id="UP000009071">
    <property type="component" value="Chromosome"/>
</dbReference>
<dbReference type="GO" id="GO:0005886">
    <property type="term" value="C:plasma membrane"/>
    <property type="evidence" value="ECO:0007669"/>
    <property type="project" value="UniProtKB-SubCell"/>
</dbReference>
<dbReference type="GO" id="GO:0043772">
    <property type="term" value="F:acyl-phosphate glycerol-3-phosphate acyltransferase activity"/>
    <property type="evidence" value="ECO:0007669"/>
    <property type="project" value="UniProtKB-UniRule"/>
</dbReference>
<dbReference type="GO" id="GO:0008654">
    <property type="term" value="P:phospholipid biosynthetic process"/>
    <property type="evidence" value="ECO:0007669"/>
    <property type="project" value="UniProtKB-UniRule"/>
</dbReference>
<dbReference type="HAMAP" id="MF_01043">
    <property type="entry name" value="PlsY"/>
    <property type="match status" value="1"/>
</dbReference>
<dbReference type="InterPro" id="IPR003811">
    <property type="entry name" value="G3P_acylTferase_PlsY"/>
</dbReference>
<dbReference type="NCBIfam" id="TIGR00023">
    <property type="entry name" value="glycerol-3-phosphate 1-O-acyltransferase PlsY"/>
    <property type="match status" value="1"/>
</dbReference>
<dbReference type="PANTHER" id="PTHR30309:SF0">
    <property type="entry name" value="GLYCEROL-3-PHOSPHATE ACYLTRANSFERASE-RELATED"/>
    <property type="match status" value="1"/>
</dbReference>
<dbReference type="PANTHER" id="PTHR30309">
    <property type="entry name" value="INNER MEMBRANE PROTEIN YGIH"/>
    <property type="match status" value="1"/>
</dbReference>
<dbReference type="Pfam" id="PF02660">
    <property type="entry name" value="G3P_acyltransf"/>
    <property type="match status" value="1"/>
</dbReference>
<dbReference type="SMART" id="SM01207">
    <property type="entry name" value="G3P_acyltransf"/>
    <property type="match status" value="1"/>
</dbReference>
<organism>
    <name type="scientific">Solidesulfovibrio magneticus (strain ATCC 700980 / DSM 13731 / RS-1)</name>
    <name type="common">Desulfovibrio magneticus</name>
    <dbReference type="NCBI Taxonomy" id="573370"/>
    <lineage>
        <taxon>Bacteria</taxon>
        <taxon>Pseudomonadati</taxon>
        <taxon>Thermodesulfobacteriota</taxon>
        <taxon>Desulfovibrionia</taxon>
        <taxon>Desulfovibrionales</taxon>
        <taxon>Desulfovibrionaceae</taxon>
        <taxon>Solidesulfovibrio</taxon>
    </lineage>
</organism>
<accession>C4XH52</accession>
<feature type="chain" id="PRO_1000213406" description="Glycerol-3-phosphate acyltransferase">
    <location>
        <begin position="1"/>
        <end position="199"/>
    </location>
</feature>
<feature type="transmembrane region" description="Helical" evidence="1">
    <location>
        <begin position="5"/>
        <end position="25"/>
    </location>
</feature>
<feature type="transmembrane region" description="Helical" evidence="1">
    <location>
        <begin position="51"/>
        <end position="71"/>
    </location>
</feature>
<feature type="transmembrane region" description="Helical" evidence="1">
    <location>
        <begin position="79"/>
        <end position="99"/>
    </location>
</feature>
<feature type="transmembrane region" description="Helical" evidence="1">
    <location>
        <begin position="112"/>
        <end position="132"/>
    </location>
</feature>
<feature type="transmembrane region" description="Helical" evidence="1">
    <location>
        <begin position="153"/>
        <end position="173"/>
    </location>
</feature>
<gene>
    <name evidence="1" type="primary">plsY</name>
    <name type="ordered locus">DMR_03290</name>
</gene>